<evidence type="ECO:0000250" key="1"/>
<evidence type="ECO:0000250" key="2">
    <source>
        <dbReference type="UniProtKB" id="P68363"/>
    </source>
</evidence>
<evidence type="ECO:0000305" key="3"/>
<sequence length="449" mass="49971">MREVISINVGQAGCQIANSCWELYCLEHGIQPDGYLTEERKAQDPDQGFSTFFSETGNGKHVPRAIYCDLEPNVVDEVRTGAYRNLFHPEMMITGKEDASNNYARGHYTVGKELIDGVLDKIRRVADNCAGLQGFLVFHSFGGGTGSGFGALLMERLSVDYGKKSKLEFCVYPAPQTATSVVEPYNSILTTHTTLEHSDCSFMVDNEAIYDICRRNLGLERPNYENLNRLIAQVVSSITASLRFDGSLNVDLNEFQTNLVPYPRIHFPLVAYSPVISAAKAAHEANSVQEMTMSCFEPNNQMVKCDPRHGKYMATCLLYRGDVVPNDAHAAVATLKTKRTIQFVDWCPTGFKLGICYQAPENVPNGDLAKVSRAVCMLSNTTAIAEAWSSLSLKFDLMHSKRAFVHWYVGEGMEEGEFSEAREDLAALERDYEEVATDSMGDEELEAEY</sequence>
<protein>
    <recommendedName>
        <fullName>Tubulin alpha chain</fullName>
        <ecNumber evidence="2">3.6.5.-</ecNumber>
    </recommendedName>
    <alternativeName>
        <fullName>Alpha-tubulin</fullName>
    </alternativeName>
</protein>
<name>TBA_GIBZE</name>
<gene>
    <name type="primary">TUB1</name>
    <name type="ORF">FGRRES_00639</name>
    <name type="ORF">FGSG_00639</name>
</gene>
<accession>Q5I2J3</accession>
<accession>A0A0E0RMY2</accession>
<accession>Q4IQ69</accession>
<accession>V6QUE5</accession>
<feature type="chain" id="PRO_0000048173" description="Tubulin alpha chain">
    <location>
        <begin position="1"/>
        <end position="449"/>
    </location>
</feature>
<feature type="active site" evidence="2">
    <location>
        <position position="254"/>
    </location>
</feature>
<feature type="binding site" evidence="2">
    <location>
        <position position="11"/>
    </location>
    <ligand>
        <name>GTP</name>
        <dbReference type="ChEBI" id="CHEBI:37565"/>
    </ligand>
</feature>
<feature type="binding site" evidence="2">
    <location>
        <position position="71"/>
    </location>
    <ligand>
        <name>GTP</name>
        <dbReference type="ChEBI" id="CHEBI:37565"/>
    </ligand>
</feature>
<feature type="binding site" evidence="2">
    <location>
        <position position="71"/>
    </location>
    <ligand>
        <name>Mg(2+)</name>
        <dbReference type="ChEBI" id="CHEBI:18420"/>
    </ligand>
</feature>
<feature type="binding site" evidence="2">
    <location>
        <position position="140"/>
    </location>
    <ligand>
        <name>GTP</name>
        <dbReference type="ChEBI" id="CHEBI:37565"/>
    </ligand>
</feature>
<feature type="binding site" evidence="2">
    <location>
        <position position="144"/>
    </location>
    <ligand>
        <name>GTP</name>
        <dbReference type="ChEBI" id="CHEBI:37565"/>
    </ligand>
</feature>
<feature type="binding site" evidence="2">
    <location>
        <position position="145"/>
    </location>
    <ligand>
        <name>GTP</name>
        <dbReference type="ChEBI" id="CHEBI:37565"/>
    </ligand>
</feature>
<feature type="binding site" evidence="2">
    <location>
        <position position="179"/>
    </location>
    <ligand>
        <name>GTP</name>
        <dbReference type="ChEBI" id="CHEBI:37565"/>
    </ligand>
</feature>
<feature type="binding site" evidence="2">
    <location>
        <position position="206"/>
    </location>
    <ligand>
        <name>GTP</name>
        <dbReference type="ChEBI" id="CHEBI:37565"/>
    </ligand>
</feature>
<feature type="binding site" evidence="2">
    <location>
        <position position="228"/>
    </location>
    <ligand>
        <name>GTP</name>
        <dbReference type="ChEBI" id="CHEBI:37565"/>
    </ligand>
</feature>
<feature type="site" description="Involved in polymerization" evidence="1">
    <location>
        <position position="449"/>
    </location>
</feature>
<feature type="sequence conflict" description="In Ref. 1; AAW55660." evidence="3" ref="1">
    <original>A</original>
    <variation>P</variation>
    <location>
        <position position="82"/>
    </location>
</feature>
<proteinExistence type="inferred from homology"/>
<keyword id="KW-0963">Cytoplasm</keyword>
<keyword id="KW-0206">Cytoskeleton</keyword>
<keyword id="KW-0342">GTP-binding</keyword>
<keyword id="KW-0378">Hydrolase</keyword>
<keyword id="KW-0460">Magnesium</keyword>
<keyword id="KW-0479">Metal-binding</keyword>
<keyword id="KW-0493">Microtubule</keyword>
<keyword id="KW-0547">Nucleotide-binding</keyword>
<keyword id="KW-1185">Reference proteome</keyword>
<organism>
    <name type="scientific">Gibberella zeae (strain ATCC MYA-4620 / CBS 123657 / FGSC 9075 / NRRL 31084 / PH-1)</name>
    <name type="common">Wheat head blight fungus</name>
    <name type="synonym">Fusarium graminearum</name>
    <dbReference type="NCBI Taxonomy" id="229533"/>
    <lineage>
        <taxon>Eukaryota</taxon>
        <taxon>Fungi</taxon>
        <taxon>Dikarya</taxon>
        <taxon>Ascomycota</taxon>
        <taxon>Pezizomycotina</taxon>
        <taxon>Sordariomycetes</taxon>
        <taxon>Hypocreomycetidae</taxon>
        <taxon>Hypocreales</taxon>
        <taxon>Nectriaceae</taxon>
        <taxon>Fusarium</taxon>
    </lineage>
</organism>
<comment type="function">
    <text>Tubulin is the major constituent of microtubules, a cylinder consisting of laterally associated linear protofilaments composed of alpha- and beta-tubulin heterodimers. Microtubules grow by the addition of GTP-tubulin dimers to the microtubule end, where a stabilizing cap forms. Below the cap, tubulin dimers are in GDP-bound state, owing to GTPase activity of alpha-tubulin.</text>
</comment>
<comment type="catalytic activity">
    <reaction evidence="2">
        <text>GTP + H2O = GDP + phosphate + H(+)</text>
        <dbReference type="Rhea" id="RHEA:19669"/>
        <dbReference type="ChEBI" id="CHEBI:15377"/>
        <dbReference type="ChEBI" id="CHEBI:15378"/>
        <dbReference type="ChEBI" id="CHEBI:37565"/>
        <dbReference type="ChEBI" id="CHEBI:43474"/>
        <dbReference type="ChEBI" id="CHEBI:58189"/>
    </reaction>
    <physiologicalReaction direction="left-to-right" evidence="2">
        <dbReference type="Rhea" id="RHEA:19670"/>
    </physiologicalReaction>
</comment>
<comment type="cofactor">
    <cofactor evidence="2">
        <name>Mg(2+)</name>
        <dbReference type="ChEBI" id="CHEBI:18420"/>
    </cofactor>
</comment>
<comment type="subunit">
    <text>Dimer of alpha and beta chains. A typical microtubule is a hollow water-filled tube with an outer diameter of 25 nm and an inner diameter of 15 nM. Alpha-beta heterodimers associate head-to-tail to form protofilaments running lengthwise along the microtubule wall with the beta-tubulin subunit facing the microtubule plus end conferring a structural polarity. Microtubules usually have 13 protofilaments but different protofilament numbers can be found in some organisms and specialized cells.</text>
</comment>
<comment type="subcellular location">
    <subcellularLocation>
        <location>Cytoplasm</location>
        <location>Cytoskeleton</location>
    </subcellularLocation>
</comment>
<comment type="similarity">
    <text evidence="3">Belongs to the tubulin family.</text>
</comment>
<dbReference type="EC" id="3.6.5.-" evidence="2"/>
<dbReference type="EMBL" id="AY860418">
    <property type="protein sequence ID" value="AAW55660.1"/>
    <property type="molecule type" value="Genomic_DNA"/>
</dbReference>
<dbReference type="EMBL" id="DS231663">
    <property type="protein sequence ID" value="ESU05846.1"/>
    <property type="molecule type" value="Genomic_DNA"/>
</dbReference>
<dbReference type="EMBL" id="HG970332">
    <property type="protein sequence ID" value="CEF72607.1"/>
    <property type="molecule type" value="Genomic_DNA"/>
</dbReference>
<dbReference type="RefSeq" id="XP_011316331.1">
    <property type="nucleotide sequence ID" value="XM_011318029.1"/>
</dbReference>
<dbReference type="SMR" id="Q5I2J3"/>
<dbReference type="FunCoup" id="Q5I2J3">
    <property type="interactions" value="1182"/>
</dbReference>
<dbReference type="STRING" id="229533.Q5I2J3"/>
<dbReference type="GeneID" id="23548123"/>
<dbReference type="KEGG" id="fgr:FGSG_00639"/>
<dbReference type="VEuPathDB" id="FungiDB:FGRAMPH1_01G01613"/>
<dbReference type="eggNOG" id="KOG1376">
    <property type="taxonomic scope" value="Eukaryota"/>
</dbReference>
<dbReference type="HOGENOM" id="CLU_015718_0_0_1"/>
<dbReference type="InParanoid" id="Q5I2J3"/>
<dbReference type="OrthoDB" id="36941at110618"/>
<dbReference type="Proteomes" id="UP000070720">
    <property type="component" value="Chromosome 1"/>
</dbReference>
<dbReference type="GO" id="GO:0005737">
    <property type="term" value="C:cytoplasm"/>
    <property type="evidence" value="ECO:0007669"/>
    <property type="project" value="UniProtKB-KW"/>
</dbReference>
<dbReference type="GO" id="GO:0005874">
    <property type="term" value="C:microtubule"/>
    <property type="evidence" value="ECO:0007669"/>
    <property type="project" value="UniProtKB-KW"/>
</dbReference>
<dbReference type="GO" id="GO:0005525">
    <property type="term" value="F:GTP binding"/>
    <property type="evidence" value="ECO:0007669"/>
    <property type="project" value="UniProtKB-KW"/>
</dbReference>
<dbReference type="GO" id="GO:0016787">
    <property type="term" value="F:hydrolase activity"/>
    <property type="evidence" value="ECO:0007669"/>
    <property type="project" value="UniProtKB-KW"/>
</dbReference>
<dbReference type="GO" id="GO:0046872">
    <property type="term" value="F:metal ion binding"/>
    <property type="evidence" value="ECO:0007669"/>
    <property type="project" value="UniProtKB-KW"/>
</dbReference>
<dbReference type="GO" id="GO:0005200">
    <property type="term" value="F:structural constituent of cytoskeleton"/>
    <property type="evidence" value="ECO:0007669"/>
    <property type="project" value="InterPro"/>
</dbReference>
<dbReference type="GO" id="GO:0007017">
    <property type="term" value="P:microtubule-based process"/>
    <property type="evidence" value="ECO:0007669"/>
    <property type="project" value="InterPro"/>
</dbReference>
<dbReference type="CDD" id="cd02186">
    <property type="entry name" value="alpha_tubulin"/>
    <property type="match status" value="1"/>
</dbReference>
<dbReference type="FunFam" id="1.10.287.600:FF:000001">
    <property type="entry name" value="Tubulin alpha chain"/>
    <property type="match status" value="1"/>
</dbReference>
<dbReference type="FunFam" id="3.30.1330.20:FF:000001">
    <property type="entry name" value="Tubulin alpha chain"/>
    <property type="match status" value="1"/>
</dbReference>
<dbReference type="FunFam" id="3.40.50.1440:FF:000008">
    <property type="entry name" value="Tubulin alpha chain"/>
    <property type="match status" value="1"/>
</dbReference>
<dbReference type="Gene3D" id="1.10.287.600">
    <property type="entry name" value="Helix hairpin bin"/>
    <property type="match status" value="1"/>
</dbReference>
<dbReference type="Gene3D" id="3.30.1330.20">
    <property type="entry name" value="Tubulin/FtsZ, C-terminal domain"/>
    <property type="match status" value="1"/>
</dbReference>
<dbReference type="Gene3D" id="3.40.50.1440">
    <property type="entry name" value="Tubulin/FtsZ, GTPase domain"/>
    <property type="match status" value="1"/>
</dbReference>
<dbReference type="InterPro" id="IPR002452">
    <property type="entry name" value="Alpha_tubulin"/>
</dbReference>
<dbReference type="InterPro" id="IPR008280">
    <property type="entry name" value="Tub_FtsZ_C"/>
</dbReference>
<dbReference type="InterPro" id="IPR000217">
    <property type="entry name" value="Tubulin"/>
</dbReference>
<dbReference type="InterPro" id="IPR037103">
    <property type="entry name" value="Tubulin/FtsZ-like_C"/>
</dbReference>
<dbReference type="InterPro" id="IPR018316">
    <property type="entry name" value="Tubulin/FtsZ_2-layer-sand-dom"/>
</dbReference>
<dbReference type="InterPro" id="IPR036525">
    <property type="entry name" value="Tubulin/FtsZ_GTPase_sf"/>
</dbReference>
<dbReference type="InterPro" id="IPR023123">
    <property type="entry name" value="Tubulin_C"/>
</dbReference>
<dbReference type="InterPro" id="IPR017975">
    <property type="entry name" value="Tubulin_CS"/>
</dbReference>
<dbReference type="InterPro" id="IPR003008">
    <property type="entry name" value="Tubulin_FtsZ_GTPase"/>
</dbReference>
<dbReference type="PANTHER" id="PTHR11588">
    <property type="entry name" value="TUBULIN"/>
    <property type="match status" value="1"/>
</dbReference>
<dbReference type="Pfam" id="PF00091">
    <property type="entry name" value="Tubulin"/>
    <property type="match status" value="1"/>
</dbReference>
<dbReference type="Pfam" id="PF03953">
    <property type="entry name" value="Tubulin_C"/>
    <property type="match status" value="1"/>
</dbReference>
<dbReference type="PRINTS" id="PR01162">
    <property type="entry name" value="ALPHATUBULIN"/>
</dbReference>
<dbReference type="PRINTS" id="PR01161">
    <property type="entry name" value="TUBULIN"/>
</dbReference>
<dbReference type="SMART" id="SM00864">
    <property type="entry name" value="Tubulin"/>
    <property type="match status" value="1"/>
</dbReference>
<dbReference type="SMART" id="SM00865">
    <property type="entry name" value="Tubulin_C"/>
    <property type="match status" value="1"/>
</dbReference>
<dbReference type="SUPFAM" id="SSF55307">
    <property type="entry name" value="Tubulin C-terminal domain-like"/>
    <property type="match status" value="1"/>
</dbReference>
<dbReference type="SUPFAM" id="SSF52490">
    <property type="entry name" value="Tubulin nucleotide-binding domain-like"/>
    <property type="match status" value="1"/>
</dbReference>
<dbReference type="PROSITE" id="PS00227">
    <property type="entry name" value="TUBULIN"/>
    <property type="match status" value="1"/>
</dbReference>
<reference key="1">
    <citation type="journal article" date="2005" name="Wei Sheng Wu Xue Bao">
        <title>Cloning of alpha-tubulin gene from Fusarium raminearum and analyzing its relationship with carbendazim-resistance.</title>
        <authorList>
            <person name="Chen C.-J."/>
            <person name="Li J."/>
            <person name="Qi Z.Q."/>
            <person name="Wang J.-X."/>
            <person name="Zhou M.-G."/>
        </authorList>
    </citation>
    <scope>NUCLEOTIDE SEQUENCE [GENOMIC DNA]</scope>
    <source>
        <strain>ZF43</strain>
    </source>
</reference>
<reference key="2">
    <citation type="journal article" date="2007" name="Science">
        <title>The Fusarium graminearum genome reveals a link between localized polymorphism and pathogen specialization.</title>
        <authorList>
            <person name="Cuomo C.A."/>
            <person name="Gueldener U."/>
            <person name="Xu J.-R."/>
            <person name="Trail F."/>
            <person name="Turgeon B.G."/>
            <person name="Di Pietro A."/>
            <person name="Walton J.D."/>
            <person name="Ma L.-J."/>
            <person name="Baker S.E."/>
            <person name="Rep M."/>
            <person name="Adam G."/>
            <person name="Antoniw J."/>
            <person name="Baldwin T."/>
            <person name="Calvo S.E."/>
            <person name="Chang Y.-L."/>
            <person name="DeCaprio D."/>
            <person name="Gale L.R."/>
            <person name="Gnerre S."/>
            <person name="Goswami R.S."/>
            <person name="Hammond-Kosack K."/>
            <person name="Harris L.J."/>
            <person name="Hilburn K."/>
            <person name="Kennell J.C."/>
            <person name="Kroken S."/>
            <person name="Magnuson J.K."/>
            <person name="Mannhaupt G."/>
            <person name="Mauceli E.W."/>
            <person name="Mewes H.-W."/>
            <person name="Mitterbauer R."/>
            <person name="Muehlbauer G."/>
            <person name="Muensterkoetter M."/>
            <person name="Nelson D."/>
            <person name="O'Donnell K."/>
            <person name="Ouellet T."/>
            <person name="Qi W."/>
            <person name="Quesneville H."/>
            <person name="Roncero M.I.G."/>
            <person name="Seong K.-Y."/>
            <person name="Tetko I.V."/>
            <person name="Urban M."/>
            <person name="Waalwijk C."/>
            <person name="Ward T.J."/>
            <person name="Yao J."/>
            <person name="Birren B.W."/>
            <person name="Kistler H.C."/>
        </authorList>
    </citation>
    <scope>NUCLEOTIDE SEQUENCE [LARGE SCALE GENOMIC DNA]</scope>
    <source>
        <strain>ATCC MYA-4620 / CBS 123657 / FGSC 9075 / NRRL 31084 / PH-1</strain>
    </source>
</reference>
<reference key="3">
    <citation type="journal article" date="2010" name="Nature">
        <title>Comparative genomics reveals mobile pathogenicity chromosomes in Fusarium.</title>
        <authorList>
            <person name="Ma L.-J."/>
            <person name="van der Does H.C."/>
            <person name="Borkovich K.A."/>
            <person name="Coleman J.J."/>
            <person name="Daboussi M.-J."/>
            <person name="Di Pietro A."/>
            <person name="Dufresne M."/>
            <person name="Freitag M."/>
            <person name="Grabherr M."/>
            <person name="Henrissat B."/>
            <person name="Houterman P.M."/>
            <person name="Kang S."/>
            <person name="Shim W.-B."/>
            <person name="Woloshuk C."/>
            <person name="Xie X."/>
            <person name="Xu J.-R."/>
            <person name="Antoniw J."/>
            <person name="Baker S.E."/>
            <person name="Bluhm B.H."/>
            <person name="Breakspear A."/>
            <person name="Brown D.W."/>
            <person name="Butchko R.A.E."/>
            <person name="Chapman S."/>
            <person name="Coulson R."/>
            <person name="Coutinho P.M."/>
            <person name="Danchin E.G.J."/>
            <person name="Diener A."/>
            <person name="Gale L.R."/>
            <person name="Gardiner D.M."/>
            <person name="Goff S."/>
            <person name="Hammond-Kosack K.E."/>
            <person name="Hilburn K."/>
            <person name="Hua-Van A."/>
            <person name="Jonkers W."/>
            <person name="Kazan K."/>
            <person name="Kodira C.D."/>
            <person name="Koehrsen M."/>
            <person name="Kumar L."/>
            <person name="Lee Y.-H."/>
            <person name="Li L."/>
            <person name="Manners J.M."/>
            <person name="Miranda-Saavedra D."/>
            <person name="Mukherjee M."/>
            <person name="Park G."/>
            <person name="Park J."/>
            <person name="Park S.-Y."/>
            <person name="Proctor R.H."/>
            <person name="Regev A."/>
            <person name="Ruiz-Roldan M.C."/>
            <person name="Sain D."/>
            <person name="Sakthikumar S."/>
            <person name="Sykes S."/>
            <person name="Schwartz D.C."/>
            <person name="Turgeon B.G."/>
            <person name="Wapinski I."/>
            <person name="Yoder O."/>
            <person name="Young S."/>
            <person name="Zeng Q."/>
            <person name="Zhou S."/>
            <person name="Galagan J."/>
            <person name="Cuomo C.A."/>
            <person name="Kistler H.C."/>
            <person name="Rep M."/>
        </authorList>
    </citation>
    <scope>GENOME REANNOTATION</scope>
    <source>
        <strain>ATCC MYA-4620 / CBS 123657 / FGSC 9075 / NRRL 31084 / PH-1</strain>
    </source>
</reference>
<reference key="4">
    <citation type="journal article" date="2015" name="BMC Genomics">
        <title>The completed genome sequence of the pathogenic ascomycete fungus Fusarium graminearum.</title>
        <authorList>
            <person name="King R."/>
            <person name="Urban M."/>
            <person name="Hammond-Kosack M.C.U."/>
            <person name="Hassani-Pak K."/>
            <person name="Hammond-Kosack K.E."/>
        </authorList>
    </citation>
    <scope>NUCLEOTIDE SEQUENCE [LARGE SCALE GENOMIC DNA]</scope>
    <source>
        <strain>ATCC MYA-4620 / CBS 123657 / FGSC 9075 / NRRL 31084 / PH-1</strain>
    </source>
</reference>